<evidence type="ECO:0000250" key="1"/>
<evidence type="ECO:0000250" key="2">
    <source>
        <dbReference type="UniProtKB" id="Q9LCC0"/>
    </source>
</evidence>
<evidence type="ECO:0000269" key="3">
    <source>
    </source>
</evidence>
<evidence type="ECO:0000305" key="4"/>
<evidence type="ECO:0000312" key="5">
    <source>
        <dbReference type="EMBL" id="ACV81784.1"/>
    </source>
</evidence>
<keyword id="KW-0378">Hydrolase</keyword>
<keyword id="KW-0614">Plasmid</keyword>
<sequence length="762" mass="84394">MKTVKIRGYCDRLSAAPGETIRFYVSADTSDGSYEAELVRLIHGDTNPAGPGYKEESVKSAADGSYPARFQRTQFGSFVEVPDASGALLADGAFSVHTFLWSTTPGRGRQGLVSRWDDERQCGWSLAIEEGRLVFTIGDESGTTNRVISDRPLFQEVWYSVTAVFDPVQKTISLHQKSVVNRTNSRFGLVVPLDSDTTVSAVSQVSPGDSRTSLLIAGLGEAAAADGRTWCIANFNGKIDAPKLYGRALSSEEAMKLAEGTVAEPWSRLAHWDFSAGIGPDGIPTDHVVDISGNGHHGQCVNQPDRGSTGWNWDGHEENFIHCPQQYGALWFHEDCLDDCRWDKDFEITLPDGLKSDFYAMKIRYGDSEDYIPFFVLPPRGKATAKILVLASTFSYLAYANEQIMHKADIGQAVAGHTPVLNENDVELHRNLDYYGLSTYDGHVDGRGVQYTSWRRPILNLRPKHRQGFGSIWELPADLHLIDWLNHNGFDYDVATEHDLNEQGVDLLRRYNVVLTGSHPEYQTWANADAWEDYLADGGRGMYLAANGMYWIVSVHPEKPWVMEVRKELGVTAWEAPPGEYHYSTNGRRGGRFRGRARATQKIWGTGMSSFGFDHSGYFVQMPDSQDKRAAWIMDGIDPDERIGDGGLVGGGAGGYELDRYDLSLGTPPNTLLLASSVEHSVVYTVIPDDKSFPHPGMNGGEHPFVRADITYFSTANGGGMFSTSSISWLGSLSWNNYDNNVSRMTRNVLTQFMKDEPAPLV</sequence>
<dbReference type="EC" id="3.5.1.56"/>
<dbReference type="EMBL" id="GQ410978">
    <property type="protein sequence ID" value="ACV81784.1"/>
    <property type="molecule type" value="Genomic_DNA"/>
</dbReference>
<dbReference type="RefSeq" id="YP_003208118.1">
    <property type="nucleotide sequence ID" value="NC_010847.2"/>
</dbReference>
<dbReference type="SMR" id="C9DQ21"/>
<dbReference type="GO" id="GO:0050116">
    <property type="term" value="F:N,N-dimethylformamidase activity"/>
    <property type="evidence" value="ECO:0007669"/>
    <property type="project" value="UniProtKB-EC"/>
</dbReference>
<dbReference type="Gene3D" id="2.60.120.200">
    <property type="match status" value="1"/>
</dbReference>
<dbReference type="InterPro" id="IPR013320">
    <property type="entry name" value="ConA-like_dom_sf"/>
</dbReference>
<dbReference type="InterPro" id="IPR046540">
    <property type="entry name" value="DMFA2_C"/>
</dbReference>
<dbReference type="Pfam" id="PF20254">
    <property type="entry name" value="DMFA2_C"/>
    <property type="match status" value="1"/>
</dbReference>
<dbReference type="SUPFAM" id="SSF49899">
    <property type="entry name" value="Concanavalin A-like lectins/glucanases"/>
    <property type="match status" value="1"/>
</dbReference>
<accession>C9DQ21</accession>
<proteinExistence type="evidence at transcript level"/>
<protein>
    <recommendedName>
        <fullName evidence="2">N,N-dimethylformamidase beta subunit</fullName>
        <ecNumber>3.5.1.56</ecNumber>
    </recommendedName>
    <alternativeName>
        <fullName evidence="2">N,N-dimethylformamidase heavy chain</fullName>
    </alternativeName>
</protein>
<gene>
    <name evidence="5" type="primary">dmfA2</name>
</gene>
<feature type="chain" id="PRO_0000404196" description="N,N-dimethylformamidase beta subunit">
    <location>
        <begin position="1"/>
        <end position="762"/>
    </location>
</feature>
<geneLocation type="plasmid" evidence="5">
    <name>pAMI2</name>
</geneLocation>
<reference evidence="5" key="1">
    <citation type="journal article" date="2007" name="J. Bacteriol.">
        <title>The SXT conjugative element and linear prophage N15 encode toxin-antitoxin-stabilizing systems homologous to the tad-ata module of the Paracoccus aminophilus plasmid pAMI2.</title>
        <authorList>
            <person name="Dziewit L."/>
            <person name="Jazurek M."/>
            <person name="Drewniak L."/>
            <person name="Baj J."/>
            <person name="Bartosik D."/>
        </authorList>
    </citation>
    <scope>NUCLEOTIDE SEQUENCE [GENOMIC DNA]</scope>
    <source>
        <strain>ATCC 49673 / DSM 8538 / JCM 7686 / NBRC 16710</strain>
    </source>
</reference>
<reference evidence="4 5" key="2">
    <citation type="journal article" date="2010" name="Appl. Environ. Microbiol.">
        <title>Plasmid pAMI2 of Paracoccus aminophilus JCM 7686 carries N,N-dimethylformamide degradation-related genes whose expression is activated by a LuxR family regulator.</title>
        <authorList>
            <person name="Dziewit L."/>
            <person name="Dmowski M."/>
            <person name="Baj J."/>
            <person name="Bartosik D."/>
        </authorList>
    </citation>
    <scope>NUCLEOTIDE SEQUENCE [GENOMIC DNA]</scope>
    <scope>INDUCTION</scope>
    <source>
        <strain>ATCC 49673 / DSM 8538 / JCM 7686 / NBRC 16710</strain>
    </source>
</reference>
<comment type="function">
    <text evidence="2">Hydrolyzes N,N-dimethylformamide, and to a lesser extent N,N-dimethylacetamide and N,N-diethylacetamide. Has no activity against the substituted amides N-methylformamide, N-ethylformamide, N-ethylformamide and N-methylacetamide or the unsubstituted amides formamide, nicotinamide, acetoamide, benzamide, acetamide and acrylamide (By similarity).</text>
</comment>
<comment type="catalytic activity">
    <reaction evidence="2">
        <text>N,N-dimethylformamide + H2O = dimethylamine + formate</text>
        <dbReference type="Rhea" id="RHEA:19517"/>
        <dbReference type="ChEBI" id="CHEBI:15377"/>
        <dbReference type="ChEBI" id="CHEBI:15740"/>
        <dbReference type="ChEBI" id="CHEBI:17741"/>
        <dbReference type="ChEBI" id="CHEBI:58040"/>
        <dbReference type="EC" id="3.5.1.56"/>
    </reaction>
</comment>
<comment type="subunit">
    <text evidence="1">Heterotetramer of two DmfA1 (alpha) and two DmfA2 (beta) subunits.</text>
</comment>
<comment type="induction">
    <text evidence="3">By N,N-dimethylformamide.</text>
</comment>
<comment type="caution">
    <text evidence="4">It is not known which subunit of DmfA1 or DmfA2 possesses catalytic activity.</text>
</comment>
<name>DMFAB_PARAH</name>
<organism>
    <name type="scientific">Paracoccus aminophilus</name>
    <dbReference type="NCBI Taxonomy" id="34003"/>
    <lineage>
        <taxon>Bacteria</taxon>
        <taxon>Pseudomonadati</taxon>
        <taxon>Pseudomonadota</taxon>
        <taxon>Alphaproteobacteria</taxon>
        <taxon>Rhodobacterales</taxon>
        <taxon>Paracoccaceae</taxon>
        <taxon>Paracoccus</taxon>
    </lineage>
</organism>